<proteinExistence type="inferred from homology"/>
<comment type="catalytic activity">
    <reaction evidence="1">
        <text>tRNA(Arg) + L-arginine + ATP = L-arginyl-tRNA(Arg) + AMP + diphosphate</text>
        <dbReference type="Rhea" id="RHEA:20301"/>
        <dbReference type="Rhea" id="RHEA-COMP:9658"/>
        <dbReference type="Rhea" id="RHEA-COMP:9673"/>
        <dbReference type="ChEBI" id="CHEBI:30616"/>
        <dbReference type="ChEBI" id="CHEBI:32682"/>
        <dbReference type="ChEBI" id="CHEBI:33019"/>
        <dbReference type="ChEBI" id="CHEBI:78442"/>
        <dbReference type="ChEBI" id="CHEBI:78513"/>
        <dbReference type="ChEBI" id="CHEBI:456215"/>
        <dbReference type="EC" id="6.1.1.19"/>
    </reaction>
</comment>
<comment type="subunit">
    <text evidence="1">Monomer.</text>
</comment>
<comment type="subcellular location">
    <subcellularLocation>
        <location evidence="1">Cytoplasm</location>
    </subcellularLocation>
</comment>
<comment type="similarity">
    <text evidence="1">Belongs to the class-I aminoacyl-tRNA synthetase family.</text>
</comment>
<organism>
    <name type="scientific">Rickettsia bellii (strain RML369-C)</name>
    <dbReference type="NCBI Taxonomy" id="336407"/>
    <lineage>
        <taxon>Bacteria</taxon>
        <taxon>Pseudomonadati</taxon>
        <taxon>Pseudomonadota</taxon>
        <taxon>Alphaproteobacteria</taxon>
        <taxon>Rickettsiales</taxon>
        <taxon>Rickettsiaceae</taxon>
        <taxon>Rickettsieae</taxon>
        <taxon>Rickettsia</taxon>
        <taxon>belli group</taxon>
    </lineage>
</organism>
<gene>
    <name evidence="1" type="primary">argS</name>
    <name type="ordered locus">RBE_1302</name>
</gene>
<feature type="chain" id="PRO_0000242083" description="Arginine--tRNA ligase">
    <location>
        <begin position="1"/>
        <end position="576"/>
    </location>
</feature>
<feature type="short sequence motif" description="'HIGH' region">
    <location>
        <begin position="126"/>
        <end position="136"/>
    </location>
</feature>
<dbReference type="EC" id="6.1.1.19" evidence="1"/>
<dbReference type="EMBL" id="CP000087">
    <property type="protein sequence ID" value="ABE05383.1"/>
    <property type="molecule type" value="Genomic_DNA"/>
</dbReference>
<dbReference type="RefSeq" id="WP_011477953.1">
    <property type="nucleotide sequence ID" value="NC_007940.1"/>
</dbReference>
<dbReference type="SMR" id="Q1RGY1"/>
<dbReference type="KEGG" id="rbe:RBE_1302"/>
<dbReference type="eggNOG" id="COG0018">
    <property type="taxonomic scope" value="Bacteria"/>
</dbReference>
<dbReference type="HOGENOM" id="CLU_006406_0_1_5"/>
<dbReference type="OrthoDB" id="9803211at2"/>
<dbReference type="Proteomes" id="UP000001951">
    <property type="component" value="Chromosome"/>
</dbReference>
<dbReference type="GO" id="GO:0005737">
    <property type="term" value="C:cytoplasm"/>
    <property type="evidence" value="ECO:0007669"/>
    <property type="project" value="UniProtKB-SubCell"/>
</dbReference>
<dbReference type="GO" id="GO:0004814">
    <property type="term" value="F:arginine-tRNA ligase activity"/>
    <property type="evidence" value="ECO:0007669"/>
    <property type="project" value="UniProtKB-UniRule"/>
</dbReference>
<dbReference type="GO" id="GO:0005524">
    <property type="term" value="F:ATP binding"/>
    <property type="evidence" value="ECO:0007669"/>
    <property type="project" value="UniProtKB-UniRule"/>
</dbReference>
<dbReference type="GO" id="GO:0006420">
    <property type="term" value="P:arginyl-tRNA aminoacylation"/>
    <property type="evidence" value="ECO:0007669"/>
    <property type="project" value="UniProtKB-UniRule"/>
</dbReference>
<dbReference type="CDD" id="cd00671">
    <property type="entry name" value="ArgRS_core"/>
    <property type="match status" value="1"/>
</dbReference>
<dbReference type="Gene3D" id="3.30.1360.70">
    <property type="entry name" value="Arginyl tRNA synthetase N-terminal domain"/>
    <property type="match status" value="1"/>
</dbReference>
<dbReference type="Gene3D" id="3.40.50.620">
    <property type="entry name" value="HUPs"/>
    <property type="match status" value="1"/>
</dbReference>
<dbReference type="Gene3D" id="1.10.730.10">
    <property type="entry name" value="Isoleucyl-tRNA Synthetase, Domain 1"/>
    <property type="match status" value="1"/>
</dbReference>
<dbReference type="HAMAP" id="MF_00123">
    <property type="entry name" value="Arg_tRNA_synth"/>
    <property type="match status" value="1"/>
</dbReference>
<dbReference type="InterPro" id="IPR001412">
    <property type="entry name" value="aa-tRNA-synth_I_CS"/>
</dbReference>
<dbReference type="InterPro" id="IPR001278">
    <property type="entry name" value="Arg-tRNA-ligase"/>
</dbReference>
<dbReference type="InterPro" id="IPR005148">
    <property type="entry name" value="Arg-tRNA-synth_N"/>
</dbReference>
<dbReference type="InterPro" id="IPR036695">
    <property type="entry name" value="Arg-tRNA-synth_N_sf"/>
</dbReference>
<dbReference type="InterPro" id="IPR035684">
    <property type="entry name" value="ArgRS_core"/>
</dbReference>
<dbReference type="InterPro" id="IPR008909">
    <property type="entry name" value="DALR_anticod-bd"/>
</dbReference>
<dbReference type="InterPro" id="IPR014729">
    <property type="entry name" value="Rossmann-like_a/b/a_fold"/>
</dbReference>
<dbReference type="InterPro" id="IPR009080">
    <property type="entry name" value="tRNAsynth_Ia_anticodon-bd"/>
</dbReference>
<dbReference type="NCBIfam" id="TIGR00456">
    <property type="entry name" value="argS"/>
    <property type="match status" value="1"/>
</dbReference>
<dbReference type="PANTHER" id="PTHR11956:SF5">
    <property type="entry name" value="ARGININE--TRNA LIGASE, CYTOPLASMIC"/>
    <property type="match status" value="1"/>
</dbReference>
<dbReference type="PANTHER" id="PTHR11956">
    <property type="entry name" value="ARGINYL-TRNA SYNTHETASE"/>
    <property type="match status" value="1"/>
</dbReference>
<dbReference type="Pfam" id="PF03485">
    <property type="entry name" value="Arg_tRNA_synt_N"/>
    <property type="match status" value="1"/>
</dbReference>
<dbReference type="Pfam" id="PF05746">
    <property type="entry name" value="DALR_1"/>
    <property type="match status" value="1"/>
</dbReference>
<dbReference type="Pfam" id="PF00750">
    <property type="entry name" value="tRNA-synt_1d"/>
    <property type="match status" value="1"/>
</dbReference>
<dbReference type="PRINTS" id="PR01038">
    <property type="entry name" value="TRNASYNTHARG"/>
</dbReference>
<dbReference type="SMART" id="SM01016">
    <property type="entry name" value="Arg_tRNA_synt_N"/>
    <property type="match status" value="1"/>
</dbReference>
<dbReference type="SMART" id="SM00836">
    <property type="entry name" value="DALR_1"/>
    <property type="match status" value="1"/>
</dbReference>
<dbReference type="SUPFAM" id="SSF47323">
    <property type="entry name" value="Anticodon-binding domain of a subclass of class I aminoacyl-tRNA synthetases"/>
    <property type="match status" value="1"/>
</dbReference>
<dbReference type="SUPFAM" id="SSF55190">
    <property type="entry name" value="Arginyl-tRNA synthetase (ArgRS), N-terminal 'additional' domain"/>
    <property type="match status" value="1"/>
</dbReference>
<dbReference type="SUPFAM" id="SSF52374">
    <property type="entry name" value="Nucleotidylyl transferase"/>
    <property type="match status" value="1"/>
</dbReference>
<dbReference type="PROSITE" id="PS00178">
    <property type="entry name" value="AA_TRNA_LIGASE_I"/>
    <property type="match status" value="1"/>
</dbReference>
<reference key="1">
    <citation type="journal article" date="2006" name="PLoS Genet.">
        <title>Genome sequence of Rickettsia bellii illuminates the role of amoebae in gene exchanges between intracellular pathogens.</title>
        <authorList>
            <person name="Ogata H."/>
            <person name="La Scola B."/>
            <person name="Audic S."/>
            <person name="Renesto P."/>
            <person name="Blanc G."/>
            <person name="Robert C."/>
            <person name="Fournier P.-E."/>
            <person name="Claverie J.-M."/>
            <person name="Raoult D."/>
        </authorList>
    </citation>
    <scope>NUCLEOTIDE SEQUENCE [LARGE SCALE GENOMIC DNA]</scope>
    <source>
        <strain>RML369-C</strain>
    </source>
</reference>
<accession>Q1RGY1</accession>
<protein>
    <recommendedName>
        <fullName evidence="1">Arginine--tRNA ligase</fullName>
        <ecNumber evidence="1">6.1.1.19</ecNumber>
    </recommendedName>
    <alternativeName>
        <fullName evidence="1">Arginyl-tRNA synthetase</fullName>
        <shortName evidence="1">ArgRS</shortName>
    </alternativeName>
</protein>
<sequence length="576" mass="65078">MNIFNKLKHDIITASTQLYNNSEIANHASIETPKDSFNGDLSSNIAMIIAAKKNVPPREVALKFKEILNELPYIASIEIAGPGFINFTIKADSWHTAIKDILQNESKFFEIDVDKNKNINIEYVSANPTGPMHIGHARGAVYGDVLANILKKVGYPVTKEYYVNDAGSQINDLVSTVILRYREALGEKITITEGLYPGEYLIPVGQALAKEYGDKLLNMDELERFKIVKNFAIQKMLDLNKEDLKELGVKHDVFFSEQTLHDNGKIEKTVKLLTDMGLIYEGSVPAPKGKVHAEWENRTQELFKSTKYGDDQDRPIRKADGSWTYFASDLAYAKDKIDRGANHLIYVLGADHSGYVKRIEATVKALGKEQVKVDVKICQLVNFVENGVPVKMSKRLGTFASVQDVNHEVGKDIIRFMMLTRENNKTLDFDLIKVKEQSKENPIFYVQYAHVRTLSILSKAMETIPQSYNSFEAGTYDLSLLSSEEEIEIIKLLASWTKTLETAAKYFEPHRVAFYLINLASKFHALWNFGKENNDYRFIIENNVELTTARLALAKAIQKIIASGLEVIGVEPMTRM</sequence>
<name>SYR_RICBR</name>
<evidence type="ECO:0000255" key="1">
    <source>
        <dbReference type="HAMAP-Rule" id="MF_00123"/>
    </source>
</evidence>
<keyword id="KW-0030">Aminoacyl-tRNA synthetase</keyword>
<keyword id="KW-0067">ATP-binding</keyword>
<keyword id="KW-0963">Cytoplasm</keyword>
<keyword id="KW-0436">Ligase</keyword>
<keyword id="KW-0547">Nucleotide-binding</keyword>
<keyword id="KW-0648">Protein biosynthesis</keyword>